<sequence length="1070" mass="121121">MIRDGNEGMYTIPGFNQIQFEGFCRFINQGLMEELHKFPKIEDTDQEIEFQLFVETYQLVEPLIKERDAVYESLTYSSELYVPAGLIWKTSRAMQEQTIFIGNIPLMNSLGTSIINGIYRIVINQILQNPGVYYRSELDHNGISVYTSTIISDWGGRLELEIDRKARIWARVSRKQKISILVLLSAMGSNLREILDNVCYPEIFLSFPNDKEKKKIGSKENAILEFYQQFACVGGDPVFSESLCKELQKKFFQQRCELGRIGRRNTNQRLNLDIPQKNTFLLPRDVLAAADHLIRMKFGMGTLDDMNHLKNKRIRSVADLLQDQFGLALVRLENGVRGTICGAIRHKLIPNPKNLVTSTSFTTTYESFFGLHPLSQVLDRTNPLTQIAHGRRLSYLGPGGLTGRTASFRIRDIHPSHYGRICPIDTSEGINVGLIGSLAIHVRIGHWGSIESPFYEISERSKKAQMIYLSPSRDEYYMVAAGNSLALNRGIQEEQVVPARYRQEFLTIAWEQIHLRSIFPFQYFSIGASLIPFIEHNDANRALMSSNMQRQAVPLSRSEKCIVGTGLERQTALDSGVSAIAEREGKIIYTDTHKIIFSSNGDTMSIPLVMYQRSNKNTCMHQKPQVPRGKCIKKGQILADGATTVGGELALGKNVLVAHMPWEGYNSEDAVLISERLVYEDIYTSFYIRKYEIQTHVTSQGPERITKEIPHLEDHLLRNLDRNGIVMLGSWIETGDILVGKLTPQTATESSYAPEDRLLRAILGIQVSTAKETSLKLSIGGRGRVIDVRWIQKRGGSIYNPEMIRVYISQKREIKVGDKVAGRHGNKGIISKILPRQDMPYLQDGTPVDMVFNPLGVPSRMNVGQIFECSLGLAGDLLKRHYRIAPFDERYEQEASRKLVFSELYSASKQTKNPWVFEPEYPGKSRIFDGRTGDPFEQPVLIGKPYILKLIHQVDDKIHGRSSGHYALVTQQPLRGRAKQGGQRVGEMEVWALEGFGVAHILQEMLTYKSDHIRARQEVLGATIVGGTVPNPEDAPESFRLLVRELRSLALELNHFLVSEKNFQINRKEA</sequence>
<keyword id="KW-0150">Chloroplast</keyword>
<keyword id="KW-0240">DNA-directed RNA polymerase</keyword>
<keyword id="KW-0548">Nucleotidyltransferase</keyword>
<keyword id="KW-0934">Plastid</keyword>
<keyword id="KW-0804">Transcription</keyword>
<keyword id="KW-0808">Transferase</keyword>
<protein>
    <recommendedName>
        <fullName evidence="1">DNA-directed RNA polymerase subunit beta</fullName>
        <ecNumber evidence="1">2.7.7.6</ecNumber>
    </recommendedName>
    <alternativeName>
        <fullName evidence="1">PEP</fullName>
    </alternativeName>
    <alternativeName>
        <fullName evidence="1">Plastid-encoded RNA polymerase subunit beta</fullName>
        <shortName evidence="1">RNA polymerase subunit beta</shortName>
    </alternativeName>
</protein>
<dbReference type="EC" id="2.7.7.6" evidence="1"/>
<dbReference type="EMBL" id="EF380353">
    <property type="protein sequence ID" value="ABR01422.1"/>
    <property type="molecule type" value="Genomic_DNA"/>
</dbReference>
<dbReference type="RefSeq" id="YP_001294344.1">
    <property type="nucleotide sequence ID" value="NC_009601.1"/>
</dbReference>
<dbReference type="SMR" id="A6MMJ9"/>
<dbReference type="GeneID" id="5236599"/>
<dbReference type="GO" id="GO:0009507">
    <property type="term" value="C:chloroplast"/>
    <property type="evidence" value="ECO:0007669"/>
    <property type="project" value="UniProtKB-SubCell"/>
</dbReference>
<dbReference type="GO" id="GO:0000428">
    <property type="term" value="C:DNA-directed RNA polymerase complex"/>
    <property type="evidence" value="ECO:0007669"/>
    <property type="project" value="UniProtKB-KW"/>
</dbReference>
<dbReference type="GO" id="GO:0005739">
    <property type="term" value="C:mitochondrion"/>
    <property type="evidence" value="ECO:0007669"/>
    <property type="project" value="GOC"/>
</dbReference>
<dbReference type="GO" id="GO:0003677">
    <property type="term" value="F:DNA binding"/>
    <property type="evidence" value="ECO:0007669"/>
    <property type="project" value="UniProtKB-UniRule"/>
</dbReference>
<dbReference type="GO" id="GO:0003899">
    <property type="term" value="F:DNA-directed RNA polymerase activity"/>
    <property type="evidence" value="ECO:0007669"/>
    <property type="project" value="UniProtKB-UniRule"/>
</dbReference>
<dbReference type="GO" id="GO:0032549">
    <property type="term" value="F:ribonucleoside binding"/>
    <property type="evidence" value="ECO:0007669"/>
    <property type="project" value="InterPro"/>
</dbReference>
<dbReference type="GO" id="GO:0006351">
    <property type="term" value="P:DNA-templated transcription"/>
    <property type="evidence" value="ECO:0007669"/>
    <property type="project" value="UniProtKB-UniRule"/>
</dbReference>
<dbReference type="CDD" id="cd00653">
    <property type="entry name" value="RNA_pol_B_RPB2"/>
    <property type="match status" value="1"/>
</dbReference>
<dbReference type="FunFam" id="3.90.1110.10:FF:000009">
    <property type="entry name" value="DNA-directed RNA polymerase subunit beta"/>
    <property type="match status" value="1"/>
</dbReference>
<dbReference type="Gene3D" id="2.40.50.100">
    <property type="match status" value="1"/>
</dbReference>
<dbReference type="Gene3D" id="2.40.50.150">
    <property type="match status" value="1"/>
</dbReference>
<dbReference type="Gene3D" id="3.90.1100.10">
    <property type="match status" value="1"/>
</dbReference>
<dbReference type="Gene3D" id="2.30.150.10">
    <property type="entry name" value="DNA-directed RNA polymerase, beta subunit, external 1 domain"/>
    <property type="match status" value="1"/>
</dbReference>
<dbReference type="Gene3D" id="2.40.270.10">
    <property type="entry name" value="DNA-directed RNA polymerase, subunit 2, domain 6"/>
    <property type="match status" value="2"/>
</dbReference>
<dbReference type="Gene3D" id="3.90.1800.10">
    <property type="entry name" value="RNA polymerase alpha subunit dimerisation domain"/>
    <property type="match status" value="1"/>
</dbReference>
<dbReference type="Gene3D" id="3.90.1110.10">
    <property type="entry name" value="RNA polymerase Rpb2, domain 2"/>
    <property type="match status" value="1"/>
</dbReference>
<dbReference type="HAMAP" id="MF_01321">
    <property type="entry name" value="RNApol_bact_RpoB"/>
    <property type="match status" value="1"/>
</dbReference>
<dbReference type="InterPro" id="IPR042107">
    <property type="entry name" value="DNA-dir_RNA_pol_bsu_ext_1_sf"/>
</dbReference>
<dbReference type="InterPro" id="IPR015712">
    <property type="entry name" value="DNA-dir_RNA_pol_su2"/>
</dbReference>
<dbReference type="InterPro" id="IPR007120">
    <property type="entry name" value="DNA-dir_RNAP_su2_dom"/>
</dbReference>
<dbReference type="InterPro" id="IPR037033">
    <property type="entry name" value="DNA-dir_RNAP_su2_hyb_sf"/>
</dbReference>
<dbReference type="InterPro" id="IPR010243">
    <property type="entry name" value="RNA_pol_bsu_bac"/>
</dbReference>
<dbReference type="InterPro" id="IPR007121">
    <property type="entry name" value="RNA_pol_bsu_CS"/>
</dbReference>
<dbReference type="InterPro" id="IPR007642">
    <property type="entry name" value="RNA_pol_Rpb2_2"/>
</dbReference>
<dbReference type="InterPro" id="IPR037034">
    <property type="entry name" value="RNA_pol_Rpb2_2_sf"/>
</dbReference>
<dbReference type="InterPro" id="IPR007645">
    <property type="entry name" value="RNA_pol_Rpb2_3"/>
</dbReference>
<dbReference type="InterPro" id="IPR007641">
    <property type="entry name" value="RNA_pol_Rpb2_7"/>
</dbReference>
<dbReference type="InterPro" id="IPR014724">
    <property type="entry name" value="RNA_pol_RPB2_OB-fold"/>
</dbReference>
<dbReference type="NCBIfam" id="NF001616">
    <property type="entry name" value="PRK00405.1"/>
    <property type="match status" value="1"/>
</dbReference>
<dbReference type="PANTHER" id="PTHR20856">
    <property type="entry name" value="DNA-DIRECTED RNA POLYMERASE I SUBUNIT 2"/>
    <property type="match status" value="1"/>
</dbReference>
<dbReference type="Pfam" id="PF04561">
    <property type="entry name" value="RNA_pol_Rpb2_2"/>
    <property type="match status" value="1"/>
</dbReference>
<dbReference type="Pfam" id="PF04565">
    <property type="entry name" value="RNA_pol_Rpb2_3"/>
    <property type="match status" value="1"/>
</dbReference>
<dbReference type="Pfam" id="PF00562">
    <property type="entry name" value="RNA_pol_Rpb2_6"/>
    <property type="match status" value="1"/>
</dbReference>
<dbReference type="Pfam" id="PF04560">
    <property type="entry name" value="RNA_pol_Rpb2_7"/>
    <property type="match status" value="1"/>
</dbReference>
<dbReference type="SUPFAM" id="SSF64484">
    <property type="entry name" value="beta and beta-prime subunits of DNA dependent RNA-polymerase"/>
    <property type="match status" value="1"/>
</dbReference>
<dbReference type="PROSITE" id="PS01166">
    <property type="entry name" value="RNA_POL_BETA"/>
    <property type="match status" value="1"/>
</dbReference>
<evidence type="ECO:0000255" key="1">
    <source>
        <dbReference type="HAMAP-Rule" id="MF_01321"/>
    </source>
</evidence>
<proteinExistence type="inferred from homology"/>
<accession>A6MMJ9</accession>
<reference key="1">
    <citation type="journal article" date="2007" name="Mol. Phylogenet. Evol.">
        <title>Phylogenetic and evolutionary implications of complete chloroplast genome sequences of four early-diverging angiosperms: Buxus (Buxaceae), Chloranthus (Chloranthaceae), Dioscorea (Dioscoreaceae), and Illicium (Schisandraceae).</title>
        <authorList>
            <person name="Hansen D.R."/>
            <person name="Dastidar S.G."/>
            <person name="Cai Z."/>
            <person name="Penaflor C."/>
            <person name="Kuehl J.V."/>
            <person name="Boore J.L."/>
            <person name="Jansen R.K."/>
        </authorList>
    </citation>
    <scope>NUCLEOTIDE SEQUENCE [LARGE SCALE GENOMIC DNA]</scope>
</reference>
<geneLocation type="chloroplast"/>
<gene>
    <name evidence="1" type="primary">rpoB</name>
</gene>
<name>RPOB_DIOEL</name>
<comment type="function">
    <text evidence="1">DNA-dependent RNA polymerase catalyzes the transcription of DNA into RNA using the four ribonucleoside triphosphates as substrates.</text>
</comment>
<comment type="catalytic activity">
    <reaction evidence="1">
        <text>RNA(n) + a ribonucleoside 5'-triphosphate = RNA(n+1) + diphosphate</text>
        <dbReference type="Rhea" id="RHEA:21248"/>
        <dbReference type="Rhea" id="RHEA-COMP:14527"/>
        <dbReference type="Rhea" id="RHEA-COMP:17342"/>
        <dbReference type="ChEBI" id="CHEBI:33019"/>
        <dbReference type="ChEBI" id="CHEBI:61557"/>
        <dbReference type="ChEBI" id="CHEBI:140395"/>
        <dbReference type="EC" id="2.7.7.6"/>
    </reaction>
</comment>
<comment type="subunit">
    <text evidence="1">In plastids the minimal PEP RNA polymerase catalytic core is composed of four subunits: alpha, beta, beta', and beta''. When a (nuclear-encoded) sigma factor is associated with the core the holoenzyme is formed, which can initiate transcription.</text>
</comment>
<comment type="subcellular location">
    <subcellularLocation>
        <location>Plastid</location>
        <location>Chloroplast</location>
    </subcellularLocation>
</comment>
<comment type="similarity">
    <text evidence="1">Belongs to the RNA polymerase beta chain family.</text>
</comment>
<organism>
    <name type="scientific">Dioscorea elephantipes</name>
    <name type="common">Elephant's foot yam</name>
    <name type="synonym">Testudinaria elephantipes</name>
    <dbReference type="NCBI Taxonomy" id="145284"/>
    <lineage>
        <taxon>Eukaryota</taxon>
        <taxon>Viridiplantae</taxon>
        <taxon>Streptophyta</taxon>
        <taxon>Embryophyta</taxon>
        <taxon>Tracheophyta</taxon>
        <taxon>Spermatophyta</taxon>
        <taxon>Magnoliopsida</taxon>
        <taxon>Liliopsida</taxon>
        <taxon>Dioscoreales</taxon>
        <taxon>Dioscoreaceae</taxon>
        <taxon>Dioscorea</taxon>
    </lineage>
</organism>
<feature type="chain" id="PRO_0000300440" description="DNA-directed RNA polymerase subunit beta">
    <location>
        <begin position="1"/>
        <end position="1070"/>
    </location>
</feature>